<reference key="1">
    <citation type="journal article" date="1983" name="Toxicon">
        <title>Covalent structure of toxins I and II from the scorpion Buthus occitanus tunetanus.</title>
        <authorList>
            <person name="Gregoire J."/>
            <person name="Rochat H."/>
        </authorList>
    </citation>
    <scope>PROTEIN SEQUENCE</scope>
    <scope>SUBCELLULAR LOCATION</scope>
    <scope>AMIDATION AT PHE-65</scope>
    <source>
        <tissue>Venom</tissue>
    </source>
</reference>
<reference key="2">
    <citation type="journal article" date="1982" name="Toxicon">
        <title>Neurotoxins from the venoms of two scorpions: Buthus occitanus tunetanus and Buthus occitanus mardochei.</title>
        <authorList>
            <person name="Vargas O."/>
            <person name="Gregoire J."/>
            <person name="Martin M.-F."/>
            <person name="Bechis G."/>
            <person name="Rochat H."/>
        </authorList>
    </citation>
    <scope>PROTEIN SEQUENCE</scope>
    <scope>SUBCELLULAR LOCATION</scope>
    <source>
        <tissue>Venom</tissue>
    </source>
</reference>
<reference key="3">
    <citation type="journal article" date="2005" name="Toxicon">
        <title>Overview of scorpion toxins specific for Na+ channels and related peptides: biodiversity, structure-function relationships and evolution.</title>
        <authorList>
            <person name="Rodriguez de la Vega R.C."/>
            <person name="Possani L.D."/>
        </authorList>
    </citation>
    <scope>REVIEW</scope>
</reference>
<proteinExistence type="evidence at protein level"/>
<comment type="function">
    <text>Alpha toxins bind voltage-independently at site-3 of sodium channels (Nav) and inhibit the inactivation of the activated channels, thereby blocking neuronal transmission.</text>
</comment>
<comment type="subcellular location">
    <subcellularLocation>
        <location evidence="2 3">Secreted</location>
    </subcellularLocation>
</comment>
<comment type="tissue specificity">
    <text evidence="7 8">Expressed by the venom gland.</text>
</comment>
<comment type="domain">
    <text evidence="6">Has the structural arrangement of an alpha-helix connected to antiparallel beta-sheets by disulfide bonds (CS-alpha/beta).</text>
</comment>
<comment type="similarity">
    <text evidence="6">Belongs to the long (4 C-C) scorpion toxin superfamily. Sodium channel inhibitor family. Alpha subfamily.</text>
</comment>
<feature type="chain" id="PRO_0000066732" description="Alpha-toxin Bot1" evidence="2 3">
    <location>
        <begin position="1"/>
        <end position="65"/>
    </location>
</feature>
<feature type="domain" description="LCN-type CS-alpha/beta" evidence="1">
    <location>
        <begin position="2"/>
        <end position="64"/>
    </location>
</feature>
<feature type="modified residue" description="Phenylalanine amide" evidence="2">
    <location>
        <position position="65"/>
    </location>
</feature>
<feature type="disulfide bond" evidence="1">
    <location>
        <begin position="12"/>
        <end position="63"/>
    </location>
</feature>
<feature type="disulfide bond" evidence="1">
    <location>
        <begin position="16"/>
        <end position="36"/>
    </location>
</feature>
<feature type="disulfide bond" evidence="1">
    <location>
        <begin position="22"/>
        <end position="46"/>
    </location>
</feature>
<feature type="disulfide bond" evidence="1">
    <location>
        <begin position="26"/>
        <end position="48"/>
    </location>
</feature>
<feature type="sequence conflict" description="In Ref. 2; AA sequence." evidence="6" ref="2">
    <original>N</original>
    <variation>D</variation>
    <location>
        <position position="29"/>
    </location>
</feature>
<protein>
    <recommendedName>
        <fullName evidence="4">Alpha-toxin Bot1</fullName>
    </recommendedName>
    <alternativeName>
        <fullName>Bot I</fullName>
        <shortName>BotI</shortName>
    </alternativeName>
    <alternativeName>
        <fullName>Neurotoxin 1</fullName>
    </alternativeName>
    <alternativeName>
        <fullName evidence="5">Neurotoxin I</fullName>
    </alternativeName>
</protein>
<name>SCX1_BUTOC</name>
<organism>
    <name type="scientific">Buthus occitanus tunetanus</name>
    <name type="common">Common European scorpion</name>
    <name type="synonym">Buthus tunetanus</name>
    <dbReference type="NCBI Taxonomy" id="6871"/>
    <lineage>
        <taxon>Eukaryota</taxon>
        <taxon>Metazoa</taxon>
        <taxon>Ecdysozoa</taxon>
        <taxon>Arthropoda</taxon>
        <taxon>Chelicerata</taxon>
        <taxon>Arachnida</taxon>
        <taxon>Scorpiones</taxon>
        <taxon>Buthida</taxon>
        <taxon>Buthoidea</taxon>
        <taxon>Buthidae</taxon>
        <taxon>Buthus</taxon>
    </lineage>
</organism>
<keyword id="KW-0027">Amidation</keyword>
<keyword id="KW-0903">Direct protein sequencing</keyword>
<keyword id="KW-1015">Disulfide bond</keyword>
<keyword id="KW-0872">Ion channel impairing toxin</keyword>
<keyword id="KW-0528">Neurotoxin</keyword>
<keyword id="KW-0964">Secreted</keyword>
<keyword id="KW-0800">Toxin</keyword>
<keyword id="KW-0738">Voltage-gated sodium channel impairing toxin</keyword>
<sequence>GRDAYIAQPENCVYECAQNSYCNDLCTKNGATSGYCQWLGKYGNACWCKDLPDNVPIRIPGKCHF</sequence>
<dbReference type="PIR" id="A01748">
    <property type="entry name" value="NTSR1B"/>
</dbReference>
<dbReference type="SMR" id="P01488"/>
<dbReference type="ABCD" id="P01488">
    <property type="antibodies" value="2 sequenced antibodies"/>
</dbReference>
<dbReference type="GO" id="GO:0005576">
    <property type="term" value="C:extracellular region"/>
    <property type="evidence" value="ECO:0007669"/>
    <property type="project" value="UniProtKB-SubCell"/>
</dbReference>
<dbReference type="GO" id="GO:0019871">
    <property type="term" value="F:sodium channel inhibitor activity"/>
    <property type="evidence" value="ECO:0007669"/>
    <property type="project" value="InterPro"/>
</dbReference>
<dbReference type="GO" id="GO:0090729">
    <property type="term" value="F:toxin activity"/>
    <property type="evidence" value="ECO:0007669"/>
    <property type="project" value="UniProtKB-KW"/>
</dbReference>
<dbReference type="GO" id="GO:0006952">
    <property type="term" value="P:defense response"/>
    <property type="evidence" value="ECO:0007669"/>
    <property type="project" value="InterPro"/>
</dbReference>
<dbReference type="CDD" id="cd23106">
    <property type="entry name" value="neurotoxins_LC_scorpion"/>
    <property type="match status" value="1"/>
</dbReference>
<dbReference type="FunFam" id="3.30.30.10:FF:000002">
    <property type="entry name" value="Alpha-like toxin BmK-M1"/>
    <property type="match status" value="1"/>
</dbReference>
<dbReference type="Gene3D" id="3.30.30.10">
    <property type="entry name" value="Knottin, scorpion toxin-like"/>
    <property type="match status" value="1"/>
</dbReference>
<dbReference type="InterPro" id="IPR044062">
    <property type="entry name" value="LCN-type_CS_alpha_beta_dom"/>
</dbReference>
<dbReference type="InterPro" id="IPR003614">
    <property type="entry name" value="Scorpion_toxin-like"/>
</dbReference>
<dbReference type="InterPro" id="IPR036574">
    <property type="entry name" value="Scorpion_toxin-like_sf"/>
</dbReference>
<dbReference type="InterPro" id="IPR018218">
    <property type="entry name" value="Scorpion_toxinL"/>
</dbReference>
<dbReference type="InterPro" id="IPR002061">
    <property type="entry name" value="Scorpion_toxinL/defensin"/>
</dbReference>
<dbReference type="Pfam" id="PF00537">
    <property type="entry name" value="Toxin_3"/>
    <property type="match status" value="1"/>
</dbReference>
<dbReference type="PRINTS" id="PR00285">
    <property type="entry name" value="SCORPNTOXIN"/>
</dbReference>
<dbReference type="PRINTS" id="PR00284">
    <property type="entry name" value="TOXIN"/>
</dbReference>
<dbReference type="SMART" id="SM00505">
    <property type="entry name" value="Knot1"/>
    <property type="match status" value="1"/>
</dbReference>
<dbReference type="SUPFAM" id="SSF57095">
    <property type="entry name" value="Scorpion toxin-like"/>
    <property type="match status" value="1"/>
</dbReference>
<dbReference type="PROSITE" id="PS51863">
    <property type="entry name" value="LCN_CSAB"/>
    <property type="match status" value="1"/>
</dbReference>
<evidence type="ECO:0000255" key="1">
    <source>
        <dbReference type="PROSITE-ProRule" id="PRU01210"/>
    </source>
</evidence>
<evidence type="ECO:0000269" key="2">
    <source>
    </source>
</evidence>
<evidence type="ECO:0000269" key="3">
    <source ref="2"/>
</evidence>
<evidence type="ECO:0000303" key="4">
    <source>
    </source>
</evidence>
<evidence type="ECO:0000303" key="5">
    <source>
    </source>
</evidence>
<evidence type="ECO:0000305" key="6"/>
<evidence type="ECO:0000305" key="7">
    <source>
    </source>
</evidence>
<evidence type="ECO:0000305" key="8">
    <source ref="2"/>
</evidence>
<accession>P01488</accession>